<evidence type="ECO:0000250" key="1"/>
<evidence type="ECO:0000250" key="2">
    <source>
        <dbReference type="UniProtKB" id="P03523"/>
    </source>
</evidence>
<evidence type="ECO:0000250" key="3">
    <source>
        <dbReference type="UniProtKB" id="P28887"/>
    </source>
</evidence>
<evidence type="ECO:0000255" key="4">
    <source>
        <dbReference type="PROSITE-ProRule" id="PRU00539"/>
    </source>
</evidence>
<evidence type="ECO:0000255" key="5">
    <source>
        <dbReference type="PROSITE-ProRule" id="PRU00923"/>
    </source>
</evidence>
<evidence type="ECO:0000305" key="6"/>
<organism>
    <name type="scientific">Rabies virus (strain silver-haired bat-associated)</name>
    <name type="common">RABV</name>
    <name type="synonym">SHBRV</name>
    <dbReference type="NCBI Taxonomy" id="445793"/>
    <lineage>
        <taxon>Viruses</taxon>
        <taxon>Riboviria</taxon>
        <taxon>Orthornavirae</taxon>
        <taxon>Negarnaviricota</taxon>
        <taxon>Haploviricotina</taxon>
        <taxon>Monjiviricetes</taxon>
        <taxon>Mononegavirales</taxon>
        <taxon>Rhabdoviridae</taxon>
        <taxon>Alpharhabdovirinae</taxon>
        <taxon>Lyssavirus</taxon>
        <taxon>Lyssavirus rabies</taxon>
    </lineage>
</organism>
<proteinExistence type="inferred from homology"/>
<organismHost>
    <name type="scientific">Homo sapiens</name>
    <name type="common">Human</name>
    <dbReference type="NCBI Taxonomy" id="9606"/>
</organismHost>
<organismHost>
    <name type="scientific">Mammalia</name>
    <dbReference type="NCBI Taxonomy" id="40674"/>
</organismHost>
<name>L_RABVB</name>
<reference key="1">
    <citation type="journal article" date="2004" name="Proc. Natl. Acad. Sci. U.S.A.">
        <title>Identification of viral genomic elements responsible for rabies virus neuroinvasiveness.</title>
        <authorList>
            <person name="Faber M."/>
            <person name="Pulmanausahakul R."/>
            <person name="Nagao K."/>
            <person name="Prosniak M."/>
            <person name="Rice A.B."/>
            <person name="Koprowski H."/>
            <person name="Schnell M.J."/>
            <person name="Dietzschold B."/>
        </authorList>
    </citation>
    <scope>NUCLEOTIDE SEQUENCE [GENOMIC RNA]</scope>
</reference>
<accession>Q66T60</accession>
<feature type="chain" id="PRO_0000294418" description="Large structural protein">
    <location>
        <begin position="1"/>
        <end position="2128"/>
    </location>
</feature>
<feature type="domain" description="RdRp catalytic" evidence="4">
    <location>
        <begin position="612"/>
        <end position="800"/>
    </location>
</feature>
<feature type="domain" description="Mononegavirus-type SAM-dependent 2'-O-MTase" evidence="5">
    <location>
        <begin position="1675"/>
        <end position="1872"/>
    </location>
</feature>
<feature type="region of interest" description="Interaction with P protein" evidence="1">
    <location>
        <begin position="1563"/>
        <end position="2128"/>
    </location>
</feature>
<protein>
    <recommendedName>
        <fullName>Large structural protein</fullName>
        <shortName>Protein L</shortName>
    </recommendedName>
    <alternativeName>
        <fullName>Replicase</fullName>
    </alternativeName>
    <alternativeName>
        <fullName>Transcriptase</fullName>
    </alternativeName>
    <domain>
        <recommendedName>
            <fullName>RNA-directed RNA polymerase</fullName>
            <ecNumber evidence="3">2.7.7.48</ecNumber>
        </recommendedName>
    </domain>
    <domain>
        <recommendedName>
            <fullName evidence="2">GTP phosphohydrolase</fullName>
            <ecNumber evidence="2">3.6.1.-</ecNumber>
        </recommendedName>
    </domain>
    <domain>
        <recommendedName>
            <fullName evidence="6">GDP polyribonucleotidyltransferase</fullName>
            <ecNumber evidence="2">2.7.7.88</ecNumber>
        </recommendedName>
        <alternativeName>
            <fullName evidence="6">PRNTase</fullName>
        </alternativeName>
    </domain>
    <domain>
        <recommendedName>
            <fullName evidence="6">mRNA cap methyltransferase</fullName>
            <ecNumber evidence="2">2.1.1.375</ecNumber>
        </recommendedName>
        <alternativeName>
            <fullName evidence="2">mRNA (guanine-N(7)-)-methyltransferase</fullName>
            <shortName evidence="2">G-N7-MTase</shortName>
        </alternativeName>
        <alternativeName>
            <fullName evidence="2">mRNA (nucleoside-2'-O-)-methyltransferase</fullName>
            <shortName evidence="2">N1-2'-O-MTase</shortName>
        </alternativeName>
    </domain>
</protein>
<comment type="function">
    <text evidence="2">RNA-directed RNA polymerase that catalyzes the transcription of viral mRNAs, their capping and polyadenylation. The template is composed of the viral RNA tightly encapsidated by the nucleoprotein (N). The viral polymerase binds to the genomic RNA at the 3' leader promoter, and transcribes subsequently all viral mRNAs with a decreasing efficiency. The first gene is the most transcribed, and the last the least transcribed. The viral phosphoprotein acts as a processivity factor. Capping is concomitant with initiation of mRNA transcription. Indeed, a GDP polyribonucleotidyl transferase (PRNTase) adds the cap structure when the nascent RNA chain length has reached few nucleotides. Ribose 2'-O methylation of viral mRNA cap precedes and facilitates subsequent guanine-N-7 methylation, both activities being carried by the viral polymerase. Polyadenylation of mRNAs occur by a stuttering mechanism at a slipery stop site present at the end viral genes. After finishing transcription of a mRNA, the polymerase can resume transcription of the downstream gene.</text>
</comment>
<comment type="function">
    <text evidence="2">RNA-directed RNA polymerase that catalyzes the replication of viral genomic RNA. The template is composed of the viral RNA tightly encapsidated by the nucleoprotein (N). The replicase mode is dependent on intracellular N protein concentration. In this mode, the polymerase replicates the whole viral genome without recognizing transcriptional signals, and the replicated genome is not caped or polyadenylated.</text>
</comment>
<comment type="catalytic activity">
    <reaction evidence="4">
        <text>RNA(n) + a ribonucleoside 5'-triphosphate = RNA(n+1) + diphosphate</text>
        <dbReference type="Rhea" id="RHEA:21248"/>
        <dbReference type="Rhea" id="RHEA-COMP:14527"/>
        <dbReference type="Rhea" id="RHEA-COMP:17342"/>
        <dbReference type="ChEBI" id="CHEBI:33019"/>
        <dbReference type="ChEBI" id="CHEBI:61557"/>
        <dbReference type="ChEBI" id="CHEBI:140395"/>
        <dbReference type="EC" id="2.7.7.48"/>
    </reaction>
</comment>
<comment type="catalytic activity">
    <reaction evidence="2">
        <text>a 5'-end (5'-triphosphoguanosine)-adenylyl-adenylyl-cytidylyl-adenosine in mRNA + 2 S-adenosyl-L-methionine = a 5'-end (N(7)-methyl 5'-triphosphoguanosine)-(2'-O-methyladenylyl)-adenylyl-cytidylyl-adenosine in mRNA + 2 S-adenosyl-L-homocysteine + H(+)</text>
        <dbReference type="Rhea" id="RHEA:65376"/>
        <dbReference type="Rhea" id="RHEA-COMP:16797"/>
        <dbReference type="Rhea" id="RHEA-COMP:16798"/>
        <dbReference type="ChEBI" id="CHEBI:15378"/>
        <dbReference type="ChEBI" id="CHEBI:57856"/>
        <dbReference type="ChEBI" id="CHEBI:59789"/>
        <dbReference type="ChEBI" id="CHEBI:156483"/>
        <dbReference type="ChEBI" id="CHEBI:156484"/>
        <dbReference type="EC" id="2.1.1.375"/>
    </reaction>
</comment>
<comment type="catalytic activity">
    <reaction evidence="2">
        <text>a 5'-end (5'-triphosphoguanosine)-adenylyl-adenylyl-cytidylyl-adenosine in mRNA + S-adenosyl-L-methionine = a 5'-end (5'-triphosphoguanosine)-(2'-O-methyladenylyl)-adenylyl-cytidylyl-adenosine in mRNA + S-adenosyl-L-homocysteine + H(+)</text>
        <dbReference type="Rhea" id="RHEA:65380"/>
        <dbReference type="Rhea" id="RHEA-COMP:16797"/>
        <dbReference type="Rhea" id="RHEA-COMP:16801"/>
        <dbReference type="ChEBI" id="CHEBI:15378"/>
        <dbReference type="ChEBI" id="CHEBI:57856"/>
        <dbReference type="ChEBI" id="CHEBI:59789"/>
        <dbReference type="ChEBI" id="CHEBI:156482"/>
        <dbReference type="ChEBI" id="CHEBI:156484"/>
    </reaction>
</comment>
<comment type="catalytic activity">
    <reaction evidence="3">
        <text>a 5'-end triphospho-adenylyl-adenylyl-cytidylyl-adenosine in mRNA + GDP + H(+) = a 5'-end (5'-triphosphoguanosine)-adenylyl-adenylyl-cytidylyl-adenosine in mRNA + diphosphate</text>
        <dbReference type="Rhea" id="RHEA:65436"/>
        <dbReference type="Rhea" id="RHEA-COMP:16797"/>
        <dbReference type="Rhea" id="RHEA-COMP:16799"/>
        <dbReference type="ChEBI" id="CHEBI:15378"/>
        <dbReference type="ChEBI" id="CHEBI:33019"/>
        <dbReference type="ChEBI" id="CHEBI:58189"/>
        <dbReference type="ChEBI" id="CHEBI:156484"/>
        <dbReference type="ChEBI" id="CHEBI:156503"/>
        <dbReference type="EC" id="2.7.7.88"/>
    </reaction>
</comment>
<comment type="catalytic activity">
    <reaction evidence="2">
        <text>a 5'-end (5'-triphosphoguanosine)-(2'-O-methyladenylyl)-adenylyl-cytidylyl-adenosine in mRNA + S-adenosyl-L-methionine = a 5'-end (N(7)-methyl 5'-triphosphoguanosine)-(2'-O-methyladenylyl)-adenylyl-cytidylyl-adenosine in mRNA + S-adenosyl-L-homocysteine</text>
        <dbReference type="Rhea" id="RHEA:65440"/>
        <dbReference type="Rhea" id="RHEA-COMP:16798"/>
        <dbReference type="Rhea" id="RHEA-COMP:16801"/>
        <dbReference type="ChEBI" id="CHEBI:57856"/>
        <dbReference type="ChEBI" id="CHEBI:59789"/>
        <dbReference type="ChEBI" id="CHEBI:156482"/>
        <dbReference type="ChEBI" id="CHEBI:156483"/>
    </reaction>
</comment>
<comment type="catalytic activity">
    <reaction evidence="3">
        <text>GTP + H2O = GDP + phosphate + H(+)</text>
        <dbReference type="Rhea" id="RHEA:19669"/>
        <dbReference type="ChEBI" id="CHEBI:15377"/>
        <dbReference type="ChEBI" id="CHEBI:15378"/>
        <dbReference type="ChEBI" id="CHEBI:37565"/>
        <dbReference type="ChEBI" id="CHEBI:43474"/>
        <dbReference type="ChEBI" id="CHEBI:58189"/>
    </reaction>
</comment>
<comment type="subunit">
    <text evidence="2">May form homodimer. Interacts with the P protein.</text>
</comment>
<comment type="subcellular location">
    <subcellularLocation>
        <location evidence="2">Virion</location>
    </subcellularLocation>
    <subcellularLocation>
        <location evidence="2">Host cytoplasm</location>
    </subcellularLocation>
    <text evidence="2">L and P are packaged asymmetrically towards the blunt end of the virus.</text>
</comment>
<comment type="similarity">
    <text evidence="6">Belongs to the rhabdoviruses protein L family.</text>
</comment>
<dbReference type="EC" id="2.7.7.48" evidence="3"/>
<dbReference type="EC" id="3.6.1.-" evidence="2"/>
<dbReference type="EC" id="2.7.7.88" evidence="2"/>
<dbReference type="EC" id="2.1.1.375" evidence="2"/>
<dbReference type="EMBL" id="AY705373">
    <property type="protein sequence ID" value="AAU11519.1"/>
    <property type="molecule type" value="Genomic_RNA"/>
</dbReference>
<dbReference type="SMR" id="Q66T60"/>
<dbReference type="Proteomes" id="UP000006845">
    <property type="component" value="Genome"/>
</dbReference>
<dbReference type="GO" id="GO:0030430">
    <property type="term" value="C:host cell cytoplasm"/>
    <property type="evidence" value="ECO:0007669"/>
    <property type="project" value="UniProtKB-SubCell"/>
</dbReference>
<dbReference type="GO" id="GO:0044423">
    <property type="term" value="C:virion component"/>
    <property type="evidence" value="ECO:0007669"/>
    <property type="project" value="UniProtKB-KW"/>
</dbReference>
<dbReference type="GO" id="GO:0005524">
    <property type="term" value="F:ATP binding"/>
    <property type="evidence" value="ECO:0007669"/>
    <property type="project" value="UniProtKB-KW"/>
</dbReference>
<dbReference type="GO" id="GO:0003924">
    <property type="term" value="F:GTPase activity"/>
    <property type="evidence" value="ECO:0007669"/>
    <property type="project" value="RHEA"/>
</dbReference>
<dbReference type="GO" id="GO:0004482">
    <property type="term" value="F:mRNA 5'-cap (guanine-N7-)-methyltransferase activity"/>
    <property type="evidence" value="ECO:0007669"/>
    <property type="project" value="InterPro"/>
</dbReference>
<dbReference type="GO" id="GO:0003968">
    <property type="term" value="F:RNA-directed RNA polymerase activity"/>
    <property type="evidence" value="ECO:0007669"/>
    <property type="project" value="UniProtKB-KW"/>
</dbReference>
<dbReference type="GO" id="GO:0039689">
    <property type="term" value="P:negative stranded viral RNA replication"/>
    <property type="evidence" value="ECO:0000250"/>
    <property type="project" value="UniProtKB"/>
</dbReference>
<dbReference type="InterPro" id="IPR039530">
    <property type="entry name" value="L_methyltransferase_rhabdo"/>
</dbReference>
<dbReference type="InterPro" id="IPR039736">
    <property type="entry name" value="L_poly_C"/>
</dbReference>
<dbReference type="InterPro" id="IPR048398">
    <property type="entry name" value="Methyltrans_Mon_C"/>
</dbReference>
<dbReference type="InterPro" id="IPR048397">
    <property type="entry name" value="Methyltrans_Mon_CD"/>
</dbReference>
<dbReference type="InterPro" id="IPR026890">
    <property type="entry name" value="Mononeg_mRNAcap"/>
</dbReference>
<dbReference type="InterPro" id="IPR014023">
    <property type="entry name" value="Mononeg_RNA_pol_cat"/>
</dbReference>
<dbReference type="InterPro" id="IPR025786">
    <property type="entry name" value="Mononega_L_MeTrfase"/>
</dbReference>
<dbReference type="InterPro" id="IPR017234">
    <property type="entry name" value="RNA-dir_pol_rhabdovirus"/>
</dbReference>
<dbReference type="NCBIfam" id="TIGR04198">
    <property type="entry name" value="paramyx_RNAcap"/>
    <property type="match status" value="1"/>
</dbReference>
<dbReference type="Pfam" id="PF21080">
    <property type="entry name" value="Methyltrans_Mon_1st"/>
    <property type="match status" value="1"/>
</dbReference>
<dbReference type="Pfam" id="PF14314">
    <property type="entry name" value="Methyltrans_Mon_2nd"/>
    <property type="match status" value="1"/>
</dbReference>
<dbReference type="Pfam" id="PF21081">
    <property type="entry name" value="Methyltrans_Mon_3rd"/>
    <property type="match status" value="1"/>
</dbReference>
<dbReference type="Pfam" id="PF14318">
    <property type="entry name" value="Mononeg_mRNAcap"/>
    <property type="match status" value="1"/>
</dbReference>
<dbReference type="Pfam" id="PF00946">
    <property type="entry name" value="Mononeg_RNA_pol"/>
    <property type="match status" value="1"/>
</dbReference>
<dbReference type="PIRSF" id="PIRSF037546">
    <property type="entry name" value="RNA_pol_RhabdoV_sub"/>
    <property type="match status" value="1"/>
</dbReference>
<dbReference type="PROSITE" id="PS50526">
    <property type="entry name" value="RDRP_SSRNA_NEG_NONSEG"/>
    <property type="match status" value="1"/>
</dbReference>
<dbReference type="PROSITE" id="PS51590">
    <property type="entry name" value="SAM_MT_MNV_L"/>
    <property type="match status" value="1"/>
</dbReference>
<sequence length="2128" mass="243090">MMIDPGEVYDDPIDLIESEAEPKGNPTIPNILRNSDYNLNSPLIEDPARLMLEWLKTGNRPLRMTLTDNCSRSHKVLKDYFKRVDLGSLKVGGAAAQSMISLWLYGAHSESNRSRKCINDLAQFYYKSSPIEKLLNCTLGNRGLKTPPEGVLSCLARVDYDKAFGRYLANIYSSYLFFHVITLYMNALDWDEEKTILALWRDITSIDTGKDLVKFKDQIWGLLIVTKDFVYSQSTGCLFDRNYTLMLKDLFLSRFNSLMILLSPPEPRYSDDLISQLCQLYIAGDQVLSMCGNSGYEVIKILEPYVVNSLVQRAEKFRPLIHSLGDFPTFIRDKVGQLEGTFGPSAKRFFKVLDQFDNIHDLVFVYGCYRHWGHPYIDYRKGLSKLYDQVHLKKVIDKSYQECLASDLARRILRWGFDKYSKWYLDSRLLSRDHPLIPYIKTQTWPPRHIVDLVGDTWHKLPITQIFEIPESMDPSEILDDKSHSFTRTRLASWLSENRGGPVPSEKVIITALSKPPVNPREFLKSIDLGGLPDEDLIIGLKPKERELKIEGRFFALMSWNLRLYFVITEKLLANYILPLFDALTMTDNLNKVFKKLIDRVTGQGLLDYSRVTYAFRLDYEKWNNHQRLESTEDVFSVLDQVFGLKRVFSRTHEFFQRSWIYYSDRSDLIGLWEDQIYCLDMSDGPTCWNGQDGGLEGLRQKGWSLVSLLMIDRESQTRNTRTKILAQGDNQVLCPTYMLSPGLSREGLLYELESISRNALSIYRAIEEGASKLGLIIKKEETMCSYDFLIYGKTPLFRGNILVPESKRWARVSCISNDQIVNLANTMSTVSTNALTVAQHSQSLIKPMRDFLLMSVQAVFHYLLFSPILKGRVYKILSAEGDNFLLAMSRIIYLDPSLGGVSGMSLGRFHIRQFSDPVSEGLSFWREIWLSSNESWIHALCQEAGNPDLGERTLESFTRLLEDPTTLNIKGGASPTILLKDAIRKALYDEVDEVENSEFREAILLSKTHRDNFILFLKSIEPLFPRFLSELFSSSFLGIPESIIGLIQNSRTIRRQFRRSLSRTLEESFYNSETHGINRMTQTPQRVGRVWPCSSERADLLREISWGRKVVGTTVPHPSEMLGLIPKSSISCTCGAAGGGNPRISVSVLPSFDQSFFSRGPLKGYLGSSTSMSTQLFHAWEKVTNVHVVKRALSLKESINWFITRNSNRAQTLIRNIMSLTGPDFPLEEAPVFKRTGSALHRFKSARYSEGGYSSVCPNLLSHISVSTDTMSDLTQDGRNYDFMFQPLMLYAQTWTSELVQKDTRLKDSTFHWHLRCNKCIRPIDDMTLDTSQVFEFPDVSRRISRMVSGAVPHFRKLPDIRLRPGDFESLSGKEKSRHIGSAQGLLYSILVAIHDSGYNDGTIFPVNIYSKVSPRDYLRGLARGVLIGSSICFLTRMTNININRPLELISGVISYILLRLDNHPSLYIMLREPSLRGEIFSIPQKVPAAYPTTMKEGNRSILCYLQHVLRYEREAITASPENDWLWIFSDFRSSKMTYLTLITYQSHLLLQRVDKNLSKSMRANLRQMSSLMRQVLGGHGEDTLESDEDIQRLLKDSLRRTRWVDQEVRHAARTMTGSYSPHRRVSRKAGCSEWVCSAQQVAVSTSANPAPASELDIRTLSRRLQNPLISGLRVVQWATGAHYKLKPILDDLNVFPSLCLVVGDGSGGISRAVLNMFPDARLVFNSLLEVNDLMASGTHPLPPSAIMSGGDDIISRVIDFDSIWEKPSDLRNLTTWRYFQSVQEQVNMSYDLIICDAEVTDIASINRITLLMSDFALSIDGPLYLVFKTYGTMLVNPDYRAIQHLSRAFPAVTGFITQMTSSFSSELYLRFSKRGKFFRDAEYLTSSTLREMSLVLFNCSSPKSEMQRARSLNYQDLVRGFPDEVISNPYNEMIITLIDSDVESFLVHKMVDDLELQRGTLSKVSIIIAIMIVFSNRVFNVSKPLTDPLFYPPFDPKILRHFNICCSTMMYLSTALGDVPSFARLHDLYNRPITYYFRKQVIRGNIYLSWSWSDDTSVFKRVACNSSLSLSSHWIRLIYKIVKTTRLVGSIEDLSGEIEKHLRGYNRWITLDDIRSRSSLLDYSCL</sequence>
<gene>
    <name type="primary">L</name>
</gene>
<keyword id="KW-0067">ATP-binding</keyword>
<keyword id="KW-1035">Host cytoplasm</keyword>
<keyword id="KW-0378">Hydrolase</keyword>
<keyword id="KW-0489">Methyltransferase</keyword>
<keyword id="KW-0506">mRNA capping</keyword>
<keyword id="KW-0507">mRNA processing</keyword>
<keyword id="KW-0511">Multifunctional enzyme</keyword>
<keyword id="KW-0547">Nucleotide-binding</keyword>
<keyword id="KW-0548">Nucleotidyltransferase</keyword>
<keyword id="KW-0696">RNA-directed RNA polymerase</keyword>
<keyword id="KW-0949">S-adenosyl-L-methionine</keyword>
<keyword id="KW-0808">Transferase</keyword>
<keyword id="KW-0693">Viral RNA replication</keyword>
<keyword id="KW-0946">Virion</keyword>